<evidence type="ECO:0000255" key="1">
    <source>
        <dbReference type="HAMAP-Rule" id="MF_00188"/>
    </source>
</evidence>
<proteinExistence type="inferred from homology"/>
<organism>
    <name type="scientific">Bacillus velezensis (strain DSM 23117 / BGSC 10A6 / LMG 26770 / FZB42)</name>
    <name type="common">Bacillus amyloliquefaciens subsp. plantarum</name>
    <dbReference type="NCBI Taxonomy" id="326423"/>
    <lineage>
        <taxon>Bacteria</taxon>
        <taxon>Bacillati</taxon>
        <taxon>Bacillota</taxon>
        <taxon>Bacilli</taxon>
        <taxon>Bacillales</taxon>
        <taxon>Bacillaceae</taxon>
        <taxon>Bacillus</taxon>
        <taxon>Bacillus amyloliquefaciens group</taxon>
    </lineage>
</organism>
<dbReference type="EC" id="3.4.24.-" evidence="1"/>
<dbReference type="EMBL" id="CP000560">
    <property type="protein sequence ID" value="ABS73689.1"/>
    <property type="molecule type" value="Genomic_DNA"/>
</dbReference>
<dbReference type="RefSeq" id="WP_007407207.1">
    <property type="nucleotide sequence ID" value="NC_009725.2"/>
</dbReference>
<dbReference type="SMR" id="A7Z3W3"/>
<dbReference type="GeneID" id="93080461"/>
<dbReference type="KEGG" id="bay:RBAM_013260"/>
<dbReference type="HOGENOM" id="CLU_042266_1_0_9"/>
<dbReference type="Proteomes" id="UP000001120">
    <property type="component" value="Chromosome"/>
</dbReference>
<dbReference type="GO" id="GO:0005886">
    <property type="term" value="C:plasma membrane"/>
    <property type="evidence" value="ECO:0007669"/>
    <property type="project" value="UniProtKB-SubCell"/>
</dbReference>
<dbReference type="GO" id="GO:0004222">
    <property type="term" value="F:metalloendopeptidase activity"/>
    <property type="evidence" value="ECO:0007669"/>
    <property type="project" value="UniProtKB-UniRule"/>
</dbReference>
<dbReference type="GO" id="GO:0008270">
    <property type="term" value="F:zinc ion binding"/>
    <property type="evidence" value="ECO:0007669"/>
    <property type="project" value="UniProtKB-UniRule"/>
</dbReference>
<dbReference type="GO" id="GO:0006508">
    <property type="term" value="P:proteolysis"/>
    <property type="evidence" value="ECO:0007669"/>
    <property type="project" value="UniProtKB-KW"/>
</dbReference>
<dbReference type="CDD" id="cd07335">
    <property type="entry name" value="M48B_HtpX_like"/>
    <property type="match status" value="1"/>
</dbReference>
<dbReference type="Gene3D" id="3.30.2010.10">
    <property type="entry name" value="Metalloproteases ('zincins'), catalytic domain"/>
    <property type="match status" value="1"/>
</dbReference>
<dbReference type="HAMAP" id="MF_00188">
    <property type="entry name" value="Pept_M48_protease_HtpX"/>
    <property type="match status" value="1"/>
</dbReference>
<dbReference type="InterPro" id="IPR050083">
    <property type="entry name" value="HtpX_protease"/>
</dbReference>
<dbReference type="InterPro" id="IPR022919">
    <property type="entry name" value="Pept_M48_protease_HtpX"/>
</dbReference>
<dbReference type="InterPro" id="IPR001915">
    <property type="entry name" value="Peptidase_M48"/>
</dbReference>
<dbReference type="NCBIfam" id="NF003965">
    <property type="entry name" value="PRK05457.1"/>
    <property type="match status" value="1"/>
</dbReference>
<dbReference type="PANTHER" id="PTHR43221">
    <property type="entry name" value="PROTEASE HTPX"/>
    <property type="match status" value="1"/>
</dbReference>
<dbReference type="PANTHER" id="PTHR43221:SF1">
    <property type="entry name" value="PROTEASE HTPX"/>
    <property type="match status" value="1"/>
</dbReference>
<dbReference type="Pfam" id="PF01435">
    <property type="entry name" value="Peptidase_M48"/>
    <property type="match status" value="1"/>
</dbReference>
<gene>
    <name evidence="1" type="primary">htpX</name>
    <name type="ordered locus">RBAM_013260</name>
</gene>
<keyword id="KW-1003">Cell membrane</keyword>
<keyword id="KW-0378">Hydrolase</keyword>
<keyword id="KW-0472">Membrane</keyword>
<keyword id="KW-0479">Metal-binding</keyword>
<keyword id="KW-0482">Metalloprotease</keyword>
<keyword id="KW-0645">Protease</keyword>
<keyword id="KW-0812">Transmembrane</keyword>
<keyword id="KW-1133">Transmembrane helix</keyword>
<keyword id="KW-0862">Zinc</keyword>
<name>HTPX_BACVZ</name>
<feature type="chain" id="PRO_1000020845" description="Protease HtpX homolog">
    <location>
        <begin position="1"/>
        <end position="297"/>
    </location>
</feature>
<feature type="transmembrane region" description="Helical" evidence="1">
    <location>
        <begin position="5"/>
        <end position="25"/>
    </location>
</feature>
<feature type="transmembrane region" description="Helical" evidence="1">
    <location>
        <begin position="43"/>
        <end position="63"/>
    </location>
</feature>
<feature type="transmembrane region" description="Helical" evidence="1">
    <location>
        <begin position="169"/>
        <end position="189"/>
    </location>
</feature>
<feature type="transmembrane region" description="Helical" evidence="1">
    <location>
        <begin position="203"/>
        <end position="223"/>
    </location>
</feature>
<feature type="active site" evidence="1">
    <location>
        <position position="155"/>
    </location>
</feature>
<feature type="binding site" evidence="1">
    <location>
        <position position="154"/>
    </location>
    <ligand>
        <name>Zn(2+)</name>
        <dbReference type="ChEBI" id="CHEBI:29105"/>
        <note>catalytic</note>
    </ligand>
</feature>
<feature type="binding site" evidence="1">
    <location>
        <position position="158"/>
    </location>
    <ligand>
        <name>Zn(2+)</name>
        <dbReference type="ChEBI" id="CHEBI:29105"/>
        <note>catalytic</note>
    </ligand>
</feature>
<feature type="binding site" evidence="1">
    <location>
        <position position="229"/>
    </location>
    <ligand>
        <name>Zn(2+)</name>
        <dbReference type="ChEBI" id="CHEBI:29105"/>
        <note>catalytic</note>
    </ligand>
</feature>
<reference key="1">
    <citation type="journal article" date="2007" name="Nat. Biotechnol.">
        <title>Comparative analysis of the complete genome sequence of the plant growth-promoting bacterium Bacillus amyloliquefaciens FZB42.</title>
        <authorList>
            <person name="Chen X.H."/>
            <person name="Koumoutsi A."/>
            <person name="Scholz R."/>
            <person name="Eisenreich A."/>
            <person name="Schneider K."/>
            <person name="Heinemeyer I."/>
            <person name="Morgenstern B."/>
            <person name="Voss B."/>
            <person name="Hess W.R."/>
            <person name="Reva O."/>
            <person name="Junge H."/>
            <person name="Voigt B."/>
            <person name="Jungblut P.R."/>
            <person name="Vater J."/>
            <person name="Suessmuth R."/>
            <person name="Liesegang H."/>
            <person name="Strittmatter A."/>
            <person name="Gottschalk G."/>
            <person name="Borriss R."/>
        </authorList>
    </citation>
    <scope>NUCLEOTIDE SEQUENCE [LARGE SCALE GENOMIC DNA]</scope>
    <source>
        <strain>DSM 23117 / BGSC 10A6 / LMG 26770 / FZB42</strain>
    </source>
</reference>
<accession>A7Z3W3</accession>
<comment type="cofactor">
    <cofactor evidence="1">
        <name>Zn(2+)</name>
        <dbReference type="ChEBI" id="CHEBI:29105"/>
    </cofactor>
    <text evidence="1">Binds 1 zinc ion per subunit.</text>
</comment>
<comment type="subcellular location">
    <subcellularLocation>
        <location evidence="1">Cell membrane</location>
        <topology evidence="1">Multi-pass membrane protein</topology>
    </subcellularLocation>
</comment>
<comment type="similarity">
    <text evidence="1">Belongs to the peptidase M48B family.</text>
</comment>
<protein>
    <recommendedName>
        <fullName evidence="1">Protease HtpX homolog</fullName>
        <ecNumber evidence="1">3.4.24.-</ecNumber>
    </recommendedName>
</protein>
<sequence length="297" mass="32837">MAKRIFLFILTNLLVITTIGIVLTIITSVTGVGSYIQNGRIDLMALLVFSLVVGFVGSFISLGMSRWMAKTMMGVRVLNPKKQSLSYEEQQLVDRVHRLSRAAGMTKMPEVGIYHSPEVNAFATGPSKRRSLVAVSSGLLQQMDDAAVEGVLAHEVAHITNGDMVTMTLLQGIVNTFVVFLSRIAAWVASRFVKEDLAPVVHFIAMIVFQIIFSILGSLVVFAYSRHREFHADRGGADLAGKDKMIHALRTLKSYTGHVNEEDQTAVQTLKINGKKHSSLFSTHPDLDERIRRLEAK</sequence>